<organism>
    <name type="scientific">Azorhizobium caulinodans (strain ATCC 43989 / DSM 5975 / JCM 20966 / LMG 6465 / NBRC 14845 / NCIMB 13405 / ORS 571)</name>
    <dbReference type="NCBI Taxonomy" id="438753"/>
    <lineage>
        <taxon>Bacteria</taxon>
        <taxon>Pseudomonadati</taxon>
        <taxon>Pseudomonadota</taxon>
        <taxon>Alphaproteobacteria</taxon>
        <taxon>Hyphomicrobiales</taxon>
        <taxon>Xanthobacteraceae</taxon>
        <taxon>Azorhizobium</taxon>
    </lineage>
</organism>
<gene>
    <name evidence="1" type="primary">apt</name>
    <name type="ordered locus">AZC_3496</name>
</gene>
<accession>A8IEI6</accession>
<protein>
    <recommendedName>
        <fullName evidence="1">Adenine phosphoribosyltransferase</fullName>
        <shortName evidence="1">APRT</shortName>
        <ecNumber evidence="1">2.4.2.7</ecNumber>
    </recommendedName>
</protein>
<name>APT_AZOC5</name>
<dbReference type="EC" id="2.4.2.7" evidence="1"/>
<dbReference type="EMBL" id="AP009384">
    <property type="protein sequence ID" value="BAF89494.1"/>
    <property type="status" value="ALT_INIT"/>
    <property type="molecule type" value="Genomic_DNA"/>
</dbReference>
<dbReference type="RefSeq" id="WP_043879552.1">
    <property type="nucleotide sequence ID" value="NC_009937.1"/>
</dbReference>
<dbReference type="SMR" id="A8IEI6"/>
<dbReference type="STRING" id="438753.AZC_3496"/>
<dbReference type="KEGG" id="azc:AZC_3496"/>
<dbReference type="eggNOG" id="COG0503">
    <property type="taxonomic scope" value="Bacteria"/>
</dbReference>
<dbReference type="HOGENOM" id="CLU_063339_3_0_5"/>
<dbReference type="UniPathway" id="UPA00588">
    <property type="reaction ID" value="UER00646"/>
</dbReference>
<dbReference type="Proteomes" id="UP000000270">
    <property type="component" value="Chromosome"/>
</dbReference>
<dbReference type="GO" id="GO:0005737">
    <property type="term" value="C:cytoplasm"/>
    <property type="evidence" value="ECO:0007669"/>
    <property type="project" value="UniProtKB-SubCell"/>
</dbReference>
<dbReference type="GO" id="GO:0002055">
    <property type="term" value="F:adenine binding"/>
    <property type="evidence" value="ECO:0007669"/>
    <property type="project" value="TreeGrafter"/>
</dbReference>
<dbReference type="GO" id="GO:0003999">
    <property type="term" value="F:adenine phosphoribosyltransferase activity"/>
    <property type="evidence" value="ECO:0007669"/>
    <property type="project" value="UniProtKB-UniRule"/>
</dbReference>
<dbReference type="GO" id="GO:0016208">
    <property type="term" value="F:AMP binding"/>
    <property type="evidence" value="ECO:0007669"/>
    <property type="project" value="TreeGrafter"/>
</dbReference>
<dbReference type="GO" id="GO:0006168">
    <property type="term" value="P:adenine salvage"/>
    <property type="evidence" value="ECO:0007669"/>
    <property type="project" value="InterPro"/>
</dbReference>
<dbReference type="GO" id="GO:0044209">
    <property type="term" value="P:AMP salvage"/>
    <property type="evidence" value="ECO:0007669"/>
    <property type="project" value="UniProtKB-UniRule"/>
</dbReference>
<dbReference type="GO" id="GO:0006166">
    <property type="term" value="P:purine ribonucleoside salvage"/>
    <property type="evidence" value="ECO:0007669"/>
    <property type="project" value="UniProtKB-KW"/>
</dbReference>
<dbReference type="CDD" id="cd06223">
    <property type="entry name" value="PRTases_typeI"/>
    <property type="match status" value="1"/>
</dbReference>
<dbReference type="FunFam" id="3.40.50.2020:FF:000021">
    <property type="entry name" value="Adenine phosphoribosyltransferase"/>
    <property type="match status" value="1"/>
</dbReference>
<dbReference type="Gene3D" id="3.40.50.2020">
    <property type="match status" value="1"/>
</dbReference>
<dbReference type="HAMAP" id="MF_00004">
    <property type="entry name" value="Aden_phosphoribosyltr"/>
    <property type="match status" value="1"/>
</dbReference>
<dbReference type="InterPro" id="IPR005764">
    <property type="entry name" value="Ade_phspho_trans"/>
</dbReference>
<dbReference type="InterPro" id="IPR000836">
    <property type="entry name" value="PRibTrfase_dom"/>
</dbReference>
<dbReference type="InterPro" id="IPR029057">
    <property type="entry name" value="PRTase-like"/>
</dbReference>
<dbReference type="InterPro" id="IPR050054">
    <property type="entry name" value="UPRTase/APRTase"/>
</dbReference>
<dbReference type="NCBIfam" id="TIGR01090">
    <property type="entry name" value="apt"/>
    <property type="match status" value="1"/>
</dbReference>
<dbReference type="NCBIfam" id="NF002634">
    <property type="entry name" value="PRK02304.1-3"/>
    <property type="match status" value="1"/>
</dbReference>
<dbReference type="NCBIfam" id="NF002636">
    <property type="entry name" value="PRK02304.1-5"/>
    <property type="match status" value="1"/>
</dbReference>
<dbReference type="PANTHER" id="PTHR32315">
    <property type="entry name" value="ADENINE PHOSPHORIBOSYLTRANSFERASE"/>
    <property type="match status" value="1"/>
</dbReference>
<dbReference type="PANTHER" id="PTHR32315:SF3">
    <property type="entry name" value="ADENINE PHOSPHORIBOSYLTRANSFERASE"/>
    <property type="match status" value="1"/>
</dbReference>
<dbReference type="Pfam" id="PF00156">
    <property type="entry name" value="Pribosyltran"/>
    <property type="match status" value="1"/>
</dbReference>
<dbReference type="SUPFAM" id="SSF53271">
    <property type="entry name" value="PRTase-like"/>
    <property type="match status" value="1"/>
</dbReference>
<dbReference type="PROSITE" id="PS00103">
    <property type="entry name" value="PUR_PYR_PR_TRANSFER"/>
    <property type="match status" value="1"/>
</dbReference>
<comment type="function">
    <text evidence="1">Catalyzes a salvage reaction resulting in the formation of AMP, that is energically less costly than de novo synthesis.</text>
</comment>
<comment type="catalytic activity">
    <reaction evidence="1">
        <text>AMP + diphosphate = 5-phospho-alpha-D-ribose 1-diphosphate + adenine</text>
        <dbReference type="Rhea" id="RHEA:16609"/>
        <dbReference type="ChEBI" id="CHEBI:16708"/>
        <dbReference type="ChEBI" id="CHEBI:33019"/>
        <dbReference type="ChEBI" id="CHEBI:58017"/>
        <dbReference type="ChEBI" id="CHEBI:456215"/>
        <dbReference type="EC" id="2.4.2.7"/>
    </reaction>
</comment>
<comment type="pathway">
    <text evidence="1">Purine metabolism; AMP biosynthesis via salvage pathway; AMP from adenine: step 1/1.</text>
</comment>
<comment type="subunit">
    <text evidence="1">Homodimer.</text>
</comment>
<comment type="subcellular location">
    <subcellularLocation>
        <location evidence="1">Cytoplasm</location>
    </subcellularLocation>
</comment>
<comment type="similarity">
    <text evidence="1">Belongs to the purine/pyrimidine phosphoribosyltransferase family.</text>
</comment>
<comment type="sequence caution" evidence="2">
    <conflict type="erroneous initiation">
        <sequence resource="EMBL-CDS" id="BAF89494"/>
    </conflict>
</comment>
<keyword id="KW-0963">Cytoplasm</keyword>
<keyword id="KW-0328">Glycosyltransferase</keyword>
<keyword id="KW-0660">Purine salvage</keyword>
<keyword id="KW-1185">Reference proteome</keyword>
<keyword id="KW-0808">Transferase</keyword>
<sequence length="179" mass="19207">MSPLPDLASVVRTIPDYPKPGVMFRDITTLLGNPQAFRRTVDELVQPWAGAKIDKVAGIEARGFIVGGAVAHQLSAGFVPIRKKGKLPHQTVRMAYALEYGQDEMEMHVDAVHPGERVILVDDLIATGGTAEGAVKLLRQIGAQVEAACFIVDLPDLGGAEKLRAMGVPVRTIMSFSGH</sequence>
<evidence type="ECO:0000255" key="1">
    <source>
        <dbReference type="HAMAP-Rule" id="MF_00004"/>
    </source>
</evidence>
<evidence type="ECO:0000305" key="2"/>
<proteinExistence type="inferred from homology"/>
<feature type="chain" id="PRO_0000321338" description="Adenine phosphoribosyltransferase">
    <location>
        <begin position="1"/>
        <end position="179"/>
    </location>
</feature>
<reference key="1">
    <citation type="submission" date="2007-04" db="EMBL/GenBank/DDBJ databases">
        <title>Complete genome sequence of the nitrogen-fixing bacterium Azorhizobium caulinodans ORS571.</title>
        <authorList>
            <person name="Lee K.B."/>
            <person name="Backer P.D."/>
            <person name="Aono T."/>
            <person name="Liu C.T."/>
            <person name="Suzuki S."/>
            <person name="Suzuki T."/>
            <person name="Kaneko T."/>
            <person name="Yamada M."/>
            <person name="Tabata S."/>
            <person name="Kupfer D.M."/>
            <person name="Najar F.Z."/>
            <person name="Wiley G.B."/>
            <person name="Roe B."/>
            <person name="Binnewies T."/>
            <person name="Ussery D."/>
            <person name="Vereecke D."/>
            <person name="Gevers D."/>
            <person name="Holsters M."/>
            <person name="Oyaizu H."/>
        </authorList>
    </citation>
    <scope>NUCLEOTIDE SEQUENCE [LARGE SCALE GENOMIC DNA]</scope>
    <source>
        <strain>ATCC 43989 / DSM 5975 / JCM 20966 / LMG 6465 / NBRC 14845 / NCIMB 13405 / ORS 571</strain>
    </source>
</reference>